<proteinExistence type="evidence at transcript level"/>
<keyword id="KW-0217">Developmental protein</keyword>
<keyword id="KW-0238">DNA-binding</keyword>
<keyword id="KW-0539">Nucleus</keyword>
<keyword id="KW-1185">Reference proteome</keyword>
<keyword id="KW-0804">Transcription</keyword>
<keyword id="KW-0805">Transcription regulation</keyword>
<reference key="1">
    <citation type="journal article" date="1998" name="Mech. Dev.">
        <title>Xenopus eHAND: a marker for the developing cardiovascular system of the embryo that is regulated by bone morphogenetic proteins.</title>
        <authorList>
            <person name="Sparrow D.B."/>
            <person name="Kotecha S."/>
            <person name="Towers N."/>
            <person name="Mohun T.J."/>
        </authorList>
    </citation>
    <scope>NUCLEOTIDE SEQUENCE [MRNA]</scope>
    <source>
        <tissue>Embryo</tissue>
    </source>
</reference>
<sequence>MNLIGSYQHHHHHMMPDPFIFSPGSRCHQERPYFQGWVLNPGEVSPEFPAQPPYSPEYGAVVGPSQTSGRIENLGGKLGRRKGAPPKKERRRTESINSAFAELRECIPNVPADTKLSKIKTLRLATSYIGYLMDVLAKDSEPGGTEAFKAEIKKVDGKRRREPQPTEGYWGAAPAGEKKLKGRTGWPQQVWALELNP</sequence>
<organism>
    <name type="scientific">Xenopus laevis</name>
    <name type="common">African clawed frog</name>
    <dbReference type="NCBI Taxonomy" id="8355"/>
    <lineage>
        <taxon>Eukaryota</taxon>
        <taxon>Metazoa</taxon>
        <taxon>Chordata</taxon>
        <taxon>Craniata</taxon>
        <taxon>Vertebrata</taxon>
        <taxon>Euteleostomi</taxon>
        <taxon>Amphibia</taxon>
        <taxon>Batrachia</taxon>
        <taxon>Anura</taxon>
        <taxon>Pipoidea</taxon>
        <taxon>Pipidae</taxon>
        <taxon>Xenopodinae</taxon>
        <taxon>Xenopus</taxon>
        <taxon>Xenopus</taxon>
    </lineage>
</organism>
<protein>
    <recommendedName>
        <fullName>Heart- and neural crest derivatives-expressed protein 1</fullName>
    </recommendedName>
    <alternativeName>
        <fullName>Extraembryonic tissues, heart, autonomic nervous system and neural crest derivatives-expressed protein 1</fullName>
        <shortName>eHAND</shortName>
    </alternativeName>
</protein>
<name>HAND1_XENLA</name>
<evidence type="ECO:0000250" key="1"/>
<evidence type="ECO:0000250" key="2">
    <source>
        <dbReference type="UniProtKB" id="Q64279"/>
    </source>
</evidence>
<evidence type="ECO:0000255" key="3">
    <source>
        <dbReference type="PROSITE-ProRule" id="PRU00981"/>
    </source>
</evidence>
<evidence type="ECO:0000256" key="4">
    <source>
        <dbReference type="SAM" id="MobiDB-lite"/>
    </source>
</evidence>
<feature type="chain" id="PRO_0000127190" description="Heart- and neural crest derivatives-expressed protein 1">
    <location>
        <begin position="1"/>
        <end position="197"/>
    </location>
</feature>
<feature type="domain" description="bHLH" evidence="3">
    <location>
        <begin position="80"/>
        <end position="132"/>
    </location>
</feature>
<feature type="region of interest" description="Disordered" evidence="4">
    <location>
        <begin position="61"/>
        <end position="94"/>
    </location>
</feature>
<feature type="region of interest" description="Disordered" evidence="4">
    <location>
        <begin position="155"/>
        <end position="184"/>
    </location>
</feature>
<feature type="compositionally biased region" description="Basic residues" evidence="4">
    <location>
        <begin position="78"/>
        <end position="90"/>
    </location>
</feature>
<comment type="function">
    <text evidence="1">Plays an essential role in cardiac morphogenesis.</text>
</comment>
<comment type="subunit">
    <text>Efficient DNA binding requires dimerization with another bHLH protein.</text>
</comment>
<comment type="subcellular location">
    <subcellularLocation>
        <location evidence="3">Nucleus</location>
    </subcellularLocation>
    <subcellularLocation>
        <location evidence="2">Nucleus</location>
        <location evidence="2">Nucleolus</location>
    </subcellularLocation>
</comment>
<comment type="tissue specificity">
    <text>Highly expressed in the adult heart and expressed at lower levels in the intestine and gall bladder.</text>
</comment>
<comment type="developmental stage">
    <text>At stage 15, detectable in the anterior and ventral mesoderm near the heart primordia. At stage 22, the central band of expression in the lateral plate mesoderm is confined to the mid-embryo. By stages 28-30 (late tailbud stages), the region of expression in the lateral plate mesoderm has expanded into a symmetrical arc of ventral and lateral expression, which fuses in the midline where the straight heart tube has formed. At stage 33 (beginning of heart looping), expressed in the heart, lateral mesoderm and branchial arches. At stage 37, uniform expression in the myocardium and cardiac outflow. Most abundant in the heart and outflow tract at stage 47 (tadpole stage).</text>
</comment>
<comment type="induction">
    <text>By bone morphogenetic proteins BMP-2 and BMP-4.</text>
</comment>
<gene>
    <name type="primary">hand1</name>
    <name type="synonym">ehand</name>
</gene>
<dbReference type="EMBL" id="Z95080">
    <property type="protein sequence ID" value="CAB08267.1"/>
    <property type="molecule type" value="mRNA"/>
</dbReference>
<dbReference type="RefSeq" id="NP_001079128.1">
    <property type="nucleotide sequence ID" value="NM_001085659.1"/>
</dbReference>
<dbReference type="SMR" id="O73615"/>
<dbReference type="GeneID" id="373663"/>
<dbReference type="KEGG" id="xla:373663"/>
<dbReference type="AGR" id="Xenbase:XB-GENE-865344"/>
<dbReference type="CTD" id="373663"/>
<dbReference type="Xenbase" id="XB-GENE-865344">
    <property type="gene designation" value="hand1.L"/>
</dbReference>
<dbReference type="OMA" id="SRCHQDR"/>
<dbReference type="OrthoDB" id="10055449at2759"/>
<dbReference type="Proteomes" id="UP000186698">
    <property type="component" value="Chromosome 3L"/>
</dbReference>
<dbReference type="Bgee" id="373663">
    <property type="expression patterns" value="Expressed in heart and 6 other cell types or tissues"/>
</dbReference>
<dbReference type="GO" id="GO:0005730">
    <property type="term" value="C:nucleolus"/>
    <property type="evidence" value="ECO:0007669"/>
    <property type="project" value="UniProtKB-SubCell"/>
</dbReference>
<dbReference type="GO" id="GO:0000981">
    <property type="term" value="F:DNA-binding transcription factor activity, RNA polymerase II-specific"/>
    <property type="evidence" value="ECO:0000318"/>
    <property type="project" value="GO_Central"/>
</dbReference>
<dbReference type="GO" id="GO:0046983">
    <property type="term" value="F:protein dimerization activity"/>
    <property type="evidence" value="ECO:0007669"/>
    <property type="project" value="InterPro"/>
</dbReference>
<dbReference type="GO" id="GO:0000977">
    <property type="term" value="F:RNA polymerase II transcription regulatory region sequence-specific DNA binding"/>
    <property type="evidence" value="ECO:0000318"/>
    <property type="project" value="GO_Central"/>
</dbReference>
<dbReference type="GO" id="GO:0007507">
    <property type="term" value="P:heart development"/>
    <property type="evidence" value="ECO:0000318"/>
    <property type="project" value="GO_Central"/>
</dbReference>
<dbReference type="GO" id="GO:0006357">
    <property type="term" value="P:regulation of transcription by RNA polymerase II"/>
    <property type="evidence" value="ECO:0000318"/>
    <property type="project" value="GO_Central"/>
</dbReference>
<dbReference type="FunFam" id="4.10.280.10:FF:000010">
    <property type="entry name" value="Scleraxis bHLH transcription factor"/>
    <property type="match status" value="1"/>
</dbReference>
<dbReference type="Gene3D" id="4.10.280.10">
    <property type="entry name" value="Helix-loop-helix DNA-binding domain"/>
    <property type="match status" value="1"/>
</dbReference>
<dbReference type="InterPro" id="IPR011598">
    <property type="entry name" value="bHLH_dom"/>
</dbReference>
<dbReference type="InterPro" id="IPR050283">
    <property type="entry name" value="E-box_TF_Regulators"/>
</dbReference>
<dbReference type="InterPro" id="IPR036638">
    <property type="entry name" value="HLH_DNA-bd_sf"/>
</dbReference>
<dbReference type="PANTHER" id="PTHR23349">
    <property type="entry name" value="BASIC HELIX-LOOP-HELIX TRANSCRIPTION FACTOR, TWIST"/>
    <property type="match status" value="1"/>
</dbReference>
<dbReference type="PANTHER" id="PTHR23349:SF3">
    <property type="entry name" value="HEART- AND NEURAL CREST DERIVATIVES-EXPRESSED PROTEIN 1"/>
    <property type="match status" value="1"/>
</dbReference>
<dbReference type="Pfam" id="PF00010">
    <property type="entry name" value="HLH"/>
    <property type="match status" value="1"/>
</dbReference>
<dbReference type="SMART" id="SM00353">
    <property type="entry name" value="HLH"/>
    <property type="match status" value="1"/>
</dbReference>
<dbReference type="SUPFAM" id="SSF47459">
    <property type="entry name" value="HLH, helix-loop-helix DNA-binding domain"/>
    <property type="match status" value="1"/>
</dbReference>
<dbReference type="PROSITE" id="PS50888">
    <property type="entry name" value="BHLH"/>
    <property type="match status" value="1"/>
</dbReference>
<accession>O73615</accession>